<keyword id="KW-0963">Cytoplasm</keyword>
<keyword id="KW-0227">DNA damage</keyword>
<keyword id="KW-0233">DNA recombination</keyword>
<keyword id="KW-0234">DNA repair</keyword>
<keyword id="KW-0255">Endonuclease</keyword>
<keyword id="KW-0378">Hydrolase</keyword>
<keyword id="KW-0460">Magnesium</keyword>
<keyword id="KW-0479">Metal-binding</keyword>
<keyword id="KW-0540">Nuclease</keyword>
<dbReference type="EC" id="3.1.21.10" evidence="1"/>
<dbReference type="EMBL" id="CP001598">
    <property type="protein sequence ID" value="ACQ50250.1"/>
    <property type="molecule type" value="Genomic_DNA"/>
</dbReference>
<dbReference type="RefSeq" id="WP_000155594.1">
    <property type="nucleotide sequence ID" value="NC_012659.1"/>
</dbReference>
<dbReference type="SMR" id="C3P5S0"/>
<dbReference type="GeneID" id="45021545"/>
<dbReference type="KEGG" id="bai:BAA_1640"/>
<dbReference type="HOGENOM" id="CLU_096340_0_0_9"/>
<dbReference type="GO" id="GO:0005737">
    <property type="term" value="C:cytoplasm"/>
    <property type="evidence" value="ECO:0007669"/>
    <property type="project" value="UniProtKB-SubCell"/>
</dbReference>
<dbReference type="GO" id="GO:0004519">
    <property type="term" value="F:endonuclease activity"/>
    <property type="evidence" value="ECO:0007669"/>
    <property type="project" value="UniProtKB-UniRule"/>
</dbReference>
<dbReference type="GO" id="GO:0000287">
    <property type="term" value="F:magnesium ion binding"/>
    <property type="evidence" value="ECO:0007669"/>
    <property type="project" value="UniProtKB-UniRule"/>
</dbReference>
<dbReference type="GO" id="GO:0003676">
    <property type="term" value="F:nucleic acid binding"/>
    <property type="evidence" value="ECO:0007669"/>
    <property type="project" value="InterPro"/>
</dbReference>
<dbReference type="GO" id="GO:0007059">
    <property type="term" value="P:chromosome segregation"/>
    <property type="evidence" value="ECO:0007669"/>
    <property type="project" value="UniProtKB-UniRule"/>
</dbReference>
<dbReference type="GO" id="GO:0006310">
    <property type="term" value="P:DNA recombination"/>
    <property type="evidence" value="ECO:0007669"/>
    <property type="project" value="UniProtKB-UniRule"/>
</dbReference>
<dbReference type="GO" id="GO:0006281">
    <property type="term" value="P:DNA repair"/>
    <property type="evidence" value="ECO:0007669"/>
    <property type="project" value="UniProtKB-UniRule"/>
</dbReference>
<dbReference type="CDD" id="cd22354">
    <property type="entry name" value="RecU-like"/>
    <property type="match status" value="1"/>
</dbReference>
<dbReference type="Gene3D" id="3.40.1350.10">
    <property type="match status" value="1"/>
</dbReference>
<dbReference type="HAMAP" id="MF_00130">
    <property type="entry name" value="RecU"/>
    <property type="match status" value="1"/>
</dbReference>
<dbReference type="InterPro" id="IPR004612">
    <property type="entry name" value="Resolv_RecU"/>
</dbReference>
<dbReference type="InterPro" id="IPR011335">
    <property type="entry name" value="Restrct_endonuc-II-like"/>
</dbReference>
<dbReference type="InterPro" id="IPR011856">
    <property type="entry name" value="tRNA_endonuc-like_dom_sf"/>
</dbReference>
<dbReference type="NCBIfam" id="NF002581">
    <property type="entry name" value="PRK02234.1-2"/>
    <property type="match status" value="1"/>
</dbReference>
<dbReference type="NCBIfam" id="NF002584">
    <property type="entry name" value="PRK02234.1-5"/>
    <property type="match status" value="1"/>
</dbReference>
<dbReference type="NCBIfam" id="NF002585">
    <property type="entry name" value="PRK02234.1-6"/>
    <property type="match status" value="1"/>
</dbReference>
<dbReference type="NCBIfam" id="TIGR00648">
    <property type="entry name" value="recU"/>
    <property type="match status" value="1"/>
</dbReference>
<dbReference type="Pfam" id="PF03838">
    <property type="entry name" value="RecU"/>
    <property type="match status" value="1"/>
</dbReference>
<dbReference type="PIRSF" id="PIRSF037785">
    <property type="entry name" value="RecU"/>
    <property type="match status" value="1"/>
</dbReference>
<dbReference type="SUPFAM" id="SSF52980">
    <property type="entry name" value="Restriction endonuclease-like"/>
    <property type="match status" value="1"/>
</dbReference>
<feature type="chain" id="PRO_1000193436" description="Holliday junction resolvase RecU">
    <location>
        <begin position="1"/>
        <end position="200"/>
    </location>
</feature>
<feature type="region of interest" description="Disordered" evidence="2">
    <location>
        <begin position="1"/>
        <end position="25"/>
    </location>
</feature>
<feature type="binding site" evidence="1">
    <location>
        <position position="85"/>
    </location>
    <ligand>
        <name>Mg(2+)</name>
        <dbReference type="ChEBI" id="CHEBI:18420"/>
    </ligand>
</feature>
<feature type="binding site" evidence="1">
    <location>
        <position position="87"/>
    </location>
    <ligand>
        <name>Mg(2+)</name>
        <dbReference type="ChEBI" id="CHEBI:18420"/>
    </ligand>
</feature>
<feature type="binding site" evidence="1">
    <location>
        <position position="100"/>
    </location>
    <ligand>
        <name>Mg(2+)</name>
        <dbReference type="ChEBI" id="CHEBI:18420"/>
    </ligand>
</feature>
<feature type="binding site" evidence="1">
    <location>
        <position position="119"/>
    </location>
    <ligand>
        <name>Mg(2+)</name>
        <dbReference type="ChEBI" id="CHEBI:18420"/>
    </ligand>
</feature>
<feature type="site" description="Transition state stabilizer" evidence="1">
    <location>
        <position position="102"/>
    </location>
</feature>
<accession>C3P5S0</accession>
<gene>
    <name evidence="1" type="primary">recU</name>
    <name type="ordered locus">BAA_1640</name>
</gene>
<comment type="function">
    <text evidence="1">Endonuclease that resolves Holliday junction intermediates in genetic recombination. Cleaves mobile four-strand junctions by introducing symmetrical nicks in paired strands. Promotes annealing of linear ssDNA with homologous dsDNA. Required for DNA repair, homologous recombination and chromosome segregation.</text>
</comment>
<comment type="catalytic activity">
    <reaction evidence="1">
        <text>Endonucleolytic cleavage at a junction such as a reciprocal single-stranded crossover between two homologous DNA duplexes (Holliday junction).</text>
        <dbReference type="EC" id="3.1.21.10"/>
    </reaction>
</comment>
<comment type="cofactor">
    <cofactor evidence="1">
        <name>Mg(2+)</name>
        <dbReference type="ChEBI" id="CHEBI:18420"/>
    </cofactor>
    <text evidence="1">Binds 1 Mg(2+) ion per subunit.</text>
</comment>
<comment type="subcellular location">
    <subcellularLocation>
        <location evidence="1">Cytoplasm</location>
    </subcellularLocation>
</comment>
<comment type="similarity">
    <text evidence="1">Belongs to the RecU family.</text>
</comment>
<name>RECU_BACAA</name>
<protein>
    <recommendedName>
        <fullName evidence="1">Holliday junction resolvase RecU</fullName>
        <ecNumber evidence="1">3.1.21.10</ecNumber>
    </recommendedName>
    <alternativeName>
        <fullName evidence="1">Recombination protein U homolog</fullName>
    </alternativeName>
</protein>
<proteinExistence type="inferred from homology"/>
<organism>
    <name type="scientific">Bacillus anthracis (strain A0248)</name>
    <dbReference type="NCBI Taxonomy" id="592021"/>
    <lineage>
        <taxon>Bacteria</taxon>
        <taxon>Bacillati</taxon>
        <taxon>Bacillota</taxon>
        <taxon>Bacilli</taxon>
        <taxon>Bacillales</taxon>
        <taxon>Bacillaceae</taxon>
        <taxon>Bacillus</taxon>
        <taxon>Bacillus cereus group</taxon>
    </lineage>
</organism>
<sequence length="200" mass="23343">MTIRYPNGKRYNQASQPHKTPIKKHTYSNRGMSLEEELNETNEYYLTHNIACVHKKPTPLQIVKVDYPARSAAVVKEAYFKQPSTTDYNGVYKGKYIDFEAKETKNKTSFPLQNFHLHQIEHMKQVIAHNGIAFVIIKFTLFDELYLLDAKHIITFWNRQNTGGRKSITKEEIVEHGSLLSCGYHPRIDYIRVLDTVYFS</sequence>
<reference key="1">
    <citation type="submission" date="2009-04" db="EMBL/GenBank/DDBJ databases">
        <title>Genome sequence of Bacillus anthracis A0248.</title>
        <authorList>
            <person name="Dodson R.J."/>
            <person name="Munk A.C."/>
            <person name="Bruce D."/>
            <person name="Detter C."/>
            <person name="Tapia R."/>
            <person name="Sutton G."/>
            <person name="Sims D."/>
            <person name="Brettin T."/>
        </authorList>
    </citation>
    <scope>NUCLEOTIDE SEQUENCE [LARGE SCALE GENOMIC DNA]</scope>
    <source>
        <strain>A0248</strain>
    </source>
</reference>
<evidence type="ECO:0000255" key="1">
    <source>
        <dbReference type="HAMAP-Rule" id="MF_00130"/>
    </source>
</evidence>
<evidence type="ECO:0000256" key="2">
    <source>
        <dbReference type="SAM" id="MobiDB-lite"/>
    </source>
</evidence>